<accession>Q64XF4</accession>
<dbReference type="EC" id="2.7.1.33" evidence="1"/>
<dbReference type="EMBL" id="AP006841">
    <property type="protein sequence ID" value="BAD47822.1"/>
    <property type="status" value="ALT_INIT"/>
    <property type="molecule type" value="Genomic_DNA"/>
</dbReference>
<dbReference type="RefSeq" id="WP_011202250.1">
    <property type="nucleotide sequence ID" value="NC_006347.1"/>
</dbReference>
<dbReference type="RefSeq" id="YP_098356.3">
    <property type="nucleotide sequence ID" value="NC_006347.1"/>
</dbReference>
<dbReference type="SMR" id="Q64XF4"/>
<dbReference type="STRING" id="295405.BF1072"/>
<dbReference type="KEGG" id="bfr:BF1072"/>
<dbReference type="PATRIC" id="fig|295405.11.peg.1062"/>
<dbReference type="HOGENOM" id="CLU_066627_2_0_10"/>
<dbReference type="OrthoDB" id="9804707at2"/>
<dbReference type="UniPathway" id="UPA00241">
    <property type="reaction ID" value="UER00352"/>
</dbReference>
<dbReference type="Proteomes" id="UP000002197">
    <property type="component" value="Chromosome"/>
</dbReference>
<dbReference type="GO" id="GO:0005737">
    <property type="term" value="C:cytoplasm"/>
    <property type="evidence" value="ECO:0007669"/>
    <property type="project" value="UniProtKB-SubCell"/>
</dbReference>
<dbReference type="GO" id="GO:0005524">
    <property type="term" value="F:ATP binding"/>
    <property type="evidence" value="ECO:0007669"/>
    <property type="project" value="UniProtKB-UniRule"/>
</dbReference>
<dbReference type="GO" id="GO:0046872">
    <property type="term" value="F:metal ion binding"/>
    <property type="evidence" value="ECO:0007669"/>
    <property type="project" value="UniProtKB-KW"/>
</dbReference>
<dbReference type="GO" id="GO:0004594">
    <property type="term" value="F:pantothenate kinase activity"/>
    <property type="evidence" value="ECO:0007669"/>
    <property type="project" value="UniProtKB-UniRule"/>
</dbReference>
<dbReference type="GO" id="GO:0015937">
    <property type="term" value="P:coenzyme A biosynthetic process"/>
    <property type="evidence" value="ECO:0007669"/>
    <property type="project" value="UniProtKB-UniRule"/>
</dbReference>
<dbReference type="CDD" id="cd24015">
    <property type="entry name" value="ASKHA_NBD_PanK-III"/>
    <property type="match status" value="1"/>
</dbReference>
<dbReference type="Gene3D" id="3.30.420.40">
    <property type="match status" value="1"/>
</dbReference>
<dbReference type="HAMAP" id="MF_01274">
    <property type="entry name" value="Pantothen_kinase_3"/>
    <property type="match status" value="1"/>
</dbReference>
<dbReference type="InterPro" id="IPR043129">
    <property type="entry name" value="ATPase_NBD"/>
</dbReference>
<dbReference type="InterPro" id="IPR004619">
    <property type="entry name" value="Type_III_PanK"/>
</dbReference>
<dbReference type="NCBIfam" id="TIGR00671">
    <property type="entry name" value="baf"/>
    <property type="match status" value="1"/>
</dbReference>
<dbReference type="NCBIfam" id="NF009854">
    <property type="entry name" value="PRK13320.1-6"/>
    <property type="match status" value="1"/>
</dbReference>
<dbReference type="PANTHER" id="PTHR34265">
    <property type="entry name" value="TYPE III PANTOTHENATE KINASE"/>
    <property type="match status" value="1"/>
</dbReference>
<dbReference type="PANTHER" id="PTHR34265:SF1">
    <property type="entry name" value="TYPE III PANTOTHENATE KINASE"/>
    <property type="match status" value="1"/>
</dbReference>
<dbReference type="Pfam" id="PF03309">
    <property type="entry name" value="Pan_kinase"/>
    <property type="match status" value="1"/>
</dbReference>
<dbReference type="SUPFAM" id="SSF53067">
    <property type="entry name" value="Actin-like ATPase domain"/>
    <property type="match status" value="2"/>
</dbReference>
<sequence>MNLIIDIGNTVAKVALFDRTSMVEVVYDSNQSLDSLEAVCNKYDVRKAIVATVIDLNECVLAQLNKLPVPVLWLDSHTSLPVINLYETPETLGYDRMAAVVAAHDQFPGKDILVIDAGTCITYEFVDSLGQYHGGNISPGLWMRLKALHQFTGRLPLVHAEGRMPDMGKDTETAIRAGVKKGIEYEITGYITAMKHKYPELLVFLTGGDDFSFDTKLKSVIFADRFLVLKGLNRILNYNNGRI</sequence>
<feature type="chain" id="PRO_0000270861" description="Type III pantothenate kinase">
    <location>
        <begin position="1"/>
        <end position="243"/>
    </location>
</feature>
<feature type="active site" description="Proton acceptor" evidence="1">
    <location>
        <position position="95"/>
    </location>
</feature>
<feature type="binding site" evidence="1">
    <location>
        <begin position="6"/>
        <end position="13"/>
    </location>
    <ligand>
        <name>ATP</name>
        <dbReference type="ChEBI" id="CHEBI:30616"/>
    </ligand>
</feature>
<feature type="binding site" evidence="1">
    <location>
        <position position="86"/>
    </location>
    <ligand>
        <name>substrate</name>
    </ligand>
</feature>
<feature type="binding site" evidence="1">
    <location>
        <begin position="93"/>
        <end position="96"/>
    </location>
    <ligand>
        <name>substrate</name>
    </ligand>
</feature>
<feature type="binding site" evidence="1">
    <location>
        <position position="116"/>
    </location>
    <ligand>
        <name>K(+)</name>
        <dbReference type="ChEBI" id="CHEBI:29103"/>
    </ligand>
</feature>
<feature type="binding site" evidence="1">
    <location>
        <position position="119"/>
    </location>
    <ligand>
        <name>ATP</name>
        <dbReference type="ChEBI" id="CHEBI:30616"/>
    </ligand>
</feature>
<feature type="binding site" evidence="1">
    <location>
        <position position="171"/>
    </location>
    <ligand>
        <name>substrate</name>
    </ligand>
</feature>
<keyword id="KW-0067">ATP-binding</keyword>
<keyword id="KW-0173">Coenzyme A biosynthesis</keyword>
<keyword id="KW-0963">Cytoplasm</keyword>
<keyword id="KW-0418">Kinase</keyword>
<keyword id="KW-0479">Metal-binding</keyword>
<keyword id="KW-0547">Nucleotide-binding</keyword>
<keyword id="KW-0630">Potassium</keyword>
<keyword id="KW-0808">Transferase</keyword>
<organism>
    <name type="scientific">Bacteroides fragilis (strain YCH46)</name>
    <dbReference type="NCBI Taxonomy" id="295405"/>
    <lineage>
        <taxon>Bacteria</taxon>
        <taxon>Pseudomonadati</taxon>
        <taxon>Bacteroidota</taxon>
        <taxon>Bacteroidia</taxon>
        <taxon>Bacteroidales</taxon>
        <taxon>Bacteroidaceae</taxon>
        <taxon>Bacteroides</taxon>
    </lineage>
</organism>
<reference key="1">
    <citation type="journal article" date="2004" name="Proc. Natl. Acad. Sci. U.S.A.">
        <title>Genomic analysis of Bacteroides fragilis reveals extensive DNA inversions regulating cell surface adaptation.</title>
        <authorList>
            <person name="Kuwahara T."/>
            <person name="Yamashita A."/>
            <person name="Hirakawa H."/>
            <person name="Nakayama H."/>
            <person name="Toh H."/>
            <person name="Okada N."/>
            <person name="Kuhara S."/>
            <person name="Hattori M."/>
            <person name="Hayashi T."/>
            <person name="Ohnishi Y."/>
        </authorList>
    </citation>
    <scope>NUCLEOTIDE SEQUENCE [LARGE SCALE GENOMIC DNA]</scope>
    <source>
        <strain>YCH46</strain>
    </source>
</reference>
<gene>
    <name evidence="1" type="primary">coaX</name>
    <name type="ordered locus">BF1072</name>
</gene>
<comment type="function">
    <text evidence="1">Catalyzes the phosphorylation of pantothenate (Pan), the first step in CoA biosynthesis.</text>
</comment>
<comment type="catalytic activity">
    <reaction evidence="1">
        <text>(R)-pantothenate + ATP = (R)-4'-phosphopantothenate + ADP + H(+)</text>
        <dbReference type="Rhea" id="RHEA:16373"/>
        <dbReference type="ChEBI" id="CHEBI:10986"/>
        <dbReference type="ChEBI" id="CHEBI:15378"/>
        <dbReference type="ChEBI" id="CHEBI:29032"/>
        <dbReference type="ChEBI" id="CHEBI:30616"/>
        <dbReference type="ChEBI" id="CHEBI:456216"/>
        <dbReference type="EC" id="2.7.1.33"/>
    </reaction>
</comment>
<comment type="cofactor">
    <cofactor evidence="1">
        <name>NH4(+)</name>
        <dbReference type="ChEBI" id="CHEBI:28938"/>
    </cofactor>
    <cofactor evidence="1">
        <name>K(+)</name>
        <dbReference type="ChEBI" id="CHEBI:29103"/>
    </cofactor>
    <text evidence="1">A monovalent cation. Ammonium or potassium.</text>
</comment>
<comment type="pathway">
    <text evidence="1">Cofactor biosynthesis; coenzyme A biosynthesis; CoA from (R)-pantothenate: step 1/5.</text>
</comment>
<comment type="subunit">
    <text evidence="1">Homodimer.</text>
</comment>
<comment type="subcellular location">
    <subcellularLocation>
        <location evidence="1">Cytoplasm</location>
    </subcellularLocation>
</comment>
<comment type="similarity">
    <text evidence="1">Belongs to the type III pantothenate kinase family.</text>
</comment>
<comment type="sequence caution" evidence="2">
    <conflict type="erroneous initiation">
        <sequence resource="EMBL-CDS" id="BAD47822"/>
    </conflict>
</comment>
<evidence type="ECO:0000255" key="1">
    <source>
        <dbReference type="HAMAP-Rule" id="MF_01274"/>
    </source>
</evidence>
<evidence type="ECO:0000305" key="2"/>
<protein>
    <recommendedName>
        <fullName evidence="1">Type III pantothenate kinase</fullName>
        <ecNumber evidence="1">2.7.1.33</ecNumber>
    </recommendedName>
    <alternativeName>
        <fullName evidence="1">PanK-III</fullName>
    </alternativeName>
    <alternativeName>
        <fullName evidence="1">Pantothenic acid kinase</fullName>
    </alternativeName>
</protein>
<name>COAX_BACFR</name>
<proteinExistence type="inferred from homology"/>